<protein>
    <recommendedName>
        <fullName>Protein URE2</fullName>
    </recommendedName>
</protein>
<keyword id="KW-0534">Nitrate assimilation</keyword>
<keyword id="KW-1185">Reference proteome</keyword>
<comment type="function">
    <text evidence="1">Plays an important role in the cellular response to the nitrogen source. URE2 gene plays a major part in the repression of GLN1 and GDH2 genes by glutamine, and is required for the inactivation of glutamine synthetase. URE2 gene product may catalytically inactivate GLN3 in response to an increase in the intracellular concentration of glutamine (By similarity).</text>
</comment>
<comment type="subunit">
    <text evidence="1">Homodimer.</text>
</comment>
<comment type="similarity">
    <text evidence="2">Belongs to the GST superfamily.</text>
</comment>
<accession>Q6BM74</accession>
<feature type="chain" id="PRO_0000186007" description="Protein URE2">
    <location>
        <begin position="1"/>
        <end position="308"/>
    </location>
</feature>
<feature type="domain" description="GST N-terminal">
    <location>
        <begin position="66"/>
        <end position="150"/>
    </location>
</feature>
<feature type="domain" description="GST C-terminal">
    <location>
        <begin position="159"/>
        <end position="308"/>
    </location>
</feature>
<sequence>MTNNNSNSNNNQTISNLSAGLKSVNLADQQQNEVNLNLLQQQLQNEATTQQSQSRISQFFQNQPTEGYTLFSHRSAPNGFKVAIILSELNLPFNTIFLDFNNGEQRAPEFVTINPNARVPALIDHFNENTSIWESGAIILYLVSKYLKDNGECALWSDNLIEQSQISSWLFFQTSGHAPMIGQALHFRYFHSCPVPSAVERYTDEVRRVYGVIEMALAERREALIMDLDVENAAAYSAGTTPLSQSRYFDYPVWLVGDRATVADLSFVPWNNVVDRIGINLKVEFPEVYKWTKYMMRRPAVIRALRGD</sequence>
<reference key="1">
    <citation type="journal article" date="2004" name="Nature">
        <title>Genome evolution in yeasts.</title>
        <authorList>
            <person name="Dujon B."/>
            <person name="Sherman D."/>
            <person name="Fischer G."/>
            <person name="Durrens P."/>
            <person name="Casaregola S."/>
            <person name="Lafontaine I."/>
            <person name="de Montigny J."/>
            <person name="Marck C."/>
            <person name="Neuveglise C."/>
            <person name="Talla E."/>
            <person name="Goffard N."/>
            <person name="Frangeul L."/>
            <person name="Aigle M."/>
            <person name="Anthouard V."/>
            <person name="Babour A."/>
            <person name="Barbe V."/>
            <person name="Barnay S."/>
            <person name="Blanchin S."/>
            <person name="Beckerich J.-M."/>
            <person name="Beyne E."/>
            <person name="Bleykasten C."/>
            <person name="Boisrame A."/>
            <person name="Boyer J."/>
            <person name="Cattolico L."/>
            <person name="Confanioleri F."/>
            <person name="de Daruvar A."/>
            <person name="Despons L."/>
            <person name="Fabre E."/>
            <person name="Fairhead C."/>
            <person name="Ferry-Dumazet H."/>
            <person name="Groppi A."/>
            <person name="Hantraye F."/>
            <person name="Hennequin C."/>
            <person name="Jauniaux N."/>
            <person name="Joyet P."/>
            <person name="Kachouri R."/>
            <person name="Kerrest A."/>
            <person name="Koszul R."/>
            <person name="Lemaire M."/>
            <person name="Lesur I."/>
            <person name="Ma L."/>
            <person name="Muller H."/>
            <person name="Nicaud J.-M."/>
            <person name="Nikolski M."/>
            <person name="Oztas S."/>
            <person name="Ozier-Kalogeropoulos O."/>
            <person name="Pellenz S."/>
            <person name="Potier S."/>
            <person name="Richard G.-F."/>
            <person name="Straub M.-L."/>
            <person name="Suleau A."/>
            <person name="Swennen D."/>
            <person name="Tekaia F."/>
            <person name="Wesolowski-Louvel M."/>
            <person name="Westhof E."/>
            <person name="Wirth B."/>
            <person name="Zeniou-Meyer M."/>
            <person name="Zivanovic Y."/>
            <person name="Bolotin-Fukuhara M."/>
            <person name="Thierry A."/>
            <person name="Bouchier C."/>
            <person name="Caudron B."/>
            <person name="Scarpelli C."/>
            <person name="Gaillardin C."/>
            <person name="Weissenbach J."/>
            <person name="Wincker P."/>
            <person name="Souciet J.-L."/>
        </authorList>
    </citation>
    <scope>NUCLEOTIDE SEQUENCE [LARGE SCALE GENOMIC DNA]</scope>
    <source>
        <strain>ATCC 36239 / CBS 767 / BCRC 21394 / JCM 1990 / NBRC 0083 / IGC 2968</strain>
    </source>
</reference>
<organism>
    <name type="scientific">Debaryomyces hansenii (strain ATCC 36239 / CBS 767 / BCRC 21394 / JCM 1990 / NBRC 0083 / IGC 2968)</name>
    <name type="common">Yeast</name>
    <name type="synonym">Torulaspora hansenii</name>
    <dbReference type="NCBI Taxonomy" id="284592"/>
    <lineage>
        <taxon>Eukaryota</taxon>
        <taxon>Fungi</taxon>
        <taxon>Dikarya</taxon>
        <taxon>Ascomycota</taxon>
        <taxon>Saccharomycotina</taxon>
        <taxon>Pichiomycetes</taxon>
        <taxon>Debaryomycetaceae</taxon>
        <taxon>Debaryomyces</taxon>
    </lineage>
</organism>
<dbReference type="EMBL" id="CR382138">
    <property type="protein sequence ID" value="CAG89036.2"/>
    <property type="molecule type" value="Genomic_DNA"/>
</dbReference>
<dbReference type="RefSeq" id="XP_460697.2">
    <property type="nucleotide sequence ID" value="XM_460697.1"/>
</dbReference>
<dbReference type="SMR" id="Q6BM74"/>
<dbReference type="FunCoup" id="Q6BM74">
    <property type="interactions" value="768"/>
</dbReference>
<dbReference type="STRING" id="284592.Q6BM74"/>
<dbReference type="GeneID" id="2903499"/>
<dbReference type="KEGG" id="dha:DEHA2F07744g"/>
<dbReference type="VEuPathDB" id="FungiDB:DEHA2F07744g"/>
<dbReference type="eggNOG" id="KOG0867">
    <property type="taxonomic scope" value="Eukaryota"/>
</dbReference>
<dbReference type="HOGENOM" id="CLU_011226_14_1_1"/>
<dbReference type="InParanoid" id="Q6BM74"/>
<dbReference type="OMA" id="YEPHRID"/>
<dbReference type="OrthoDB" id="422574at2759"/>
<dbReference type="Proteomes" id="UP000000599">
    <property type="component" value="Chromosome F"/>
</dbReference>
<dbReference type="GO" id="GO:0005737">
    <property type="term" value="C:cytoplasm"/>
    <property type="evidence" value="ECO:0007669"/>
    <property type="project" value="EnsemblFungi"/>
</dbReference>
<dbReference type="GO" id="GO:0004602">
    <property type="term" value="F:glutathione peroxidase activity"/>
    <property type="evidence" value="ECO:0007669"/>
    <property type="project" value="EnsemblFungi"/>
</dbReference>
<dbReference type="GO" id="GO:0051219">
    <property type="term" value="F:phosphoprotein binding"/>
    <property type="evidence" value="ECO:0007669"/>
    <property type="project" value="EnsemblFungi"/>
</dbReference>
<dbReference type="GO" id="GO:0003714">
    <property type="term" value="F:transcription corepressor activity"/>
    <property type="evidence" value="ECO:0007669"/>
    <property type="project" value="InterPro"/>
</dbReference>
<dbReference type="GO" id="GO:0010621">
    <property type="term" value="P:negative regulation of transcription by transcription factor localization"/>
    <property type="evidence" value="ECO:0007669"/>
    <property type="project" value="EnsemblFungi"/>
</dbReference>
<dbReference type="GO" id="GO:0042128">
    <property type="term" value="P:nitrate assimilation"/>
    <property type="evidence" value="ECO:0007669"/>
    <property type="project" value="UniProtKB-KW"/>
</dbReference>
<dbReference type="GO" id="GO:0032447">
    <property type="term" value="P:protein urmylation"/>
    <property type="evidence" value="ECO:0007669"/>
    <property type="project" value="EnsemblFungi"/>
</dbReference>
<dbReference type="GO" id="GO:0006808">
    <property type="term" value="P:regulation of nitrogen utilization"/>
    <property type="evidence" value="ECO:0007669"/>
    <property type="project" value="EnsemblFungi"/>
</dbReference>
<dbReference type="CDD" id="cd03048">
    <property type="entry name" value="GST_N_Ure2p_like"/>
    <property type="match status" value="1"/>
</dbReference>
<dbReference type="FunFam" id="3.40.30.10:FF:000222">
    <property type="entry name" value="Protein URE2"/>
    <property type="match status" value="1"/>
</dbReference>
<dbReference type="FunFam" id="1.20.1050.10:FF:000034">
    <property type="entry name" value="Transcriptional regulator URE2"/>
    <property type="match status" value="1"/>
</dbReference>
<dbReference type="Gene3D" id="1.20.1050.10">
    <property type="match status" value="1"/>
</dbReference>
<dbReference type="Gene3D" id="3.40.30.10">
    <property type="entry name" value="Glutaredoxin"/>
    <property type="match status" value="1"/>
</dbReference>
<dbReference type="InterPro" id="IPR010987">
    <property type="entry name" value="Glutathione-S-Trfase_C-like"/>
</dbReference>
<dbReference type="InterPro" id="IPR036282">
    <property type="entry name" value="Glutathione-S-Trfase_C_sf"/>
</dbReference>
<dbReference type="InterPro" id="IPR040079">
    <property type="entry name" value="Glutathione_S-Trfase"/>
</dbReference>
<dbReference type="InterPro" id="IPR004045">
    <property type="entry name" value="Glutathione_S-Trfase_N"/>
</dbReference>
<dbReference type="InterPro" id="IPR004046">
    <property type="entry name" value="GST_C"/>
</dbReference>
<dbReference type="InterPro" id="IPR036249">
    <property type="entry name" value="Thioredoxin-like_sf"/>
</dbReference>
<dbReference type="InterPro" id="IPR017298">
    <property type="entry name" value="Ure2"/>
</dbReference>
<dbReference type="PANTHER" id="PTHR44051">
    <property type="entry name" value="GLUTATHIONE S-TRANSFERASE-RELATED"/>
    <property type="match status" value="1"/>
</dbReference>
<dbReference type="PANTHER" id="PTHR44051:SF3">
    <property type="entry name" value="TRANSCRIPTIONAL REGULATOR URE2"/>
    <property type="match status" value="1"/>
</dbReference>
<dbReference type="Pfam" id="PF00043">
    <property type="entry name" value="GST_C"/>
    <property type="match status" value="1"/>
</dbReference>
<dbReference type="Pfam" id="PF02798">
    <property type="entry name" value="GST_N"/>
    <property type="match status" value="1"/>
</dbReference>
<dbReference type="PIRSF" id="PIRSF037861">
    <property type="entry name" value="Prion_URE2"/>
    <property type="match status" value="1"/>
</dbReference>
<dbReference type="SFLD" id="SFLDS00019">
    <property type="entry name" value="Glutathione_Transferase_(cytos"/>
    <property type="match status" value="1"/>
</dbReference>
<dbReference type="SFLD" id="SFLDG00358">
    <property type="entry name" value="Main_(cytGST)"/>
    <property type="match status" value="1"/>
</dbReference>
<dbReference type="SUPFAM" id="SSF47616">
    <property type="entry name" value="GST C-terminal domain-like"/>
    <property type="match status" value="1"/>
</dbReference>
<dbReference type="SUPFAM" id="SSF52833">
    <property type="entry name" value="Thioredoxin-like"/>
    <property type="match status" value="1"/>
</dbReference>
<dbReference type="PROSITE" id="PS50405">
    <property type="entry name" value="GST_CTER"/>
    <property type="match status" value="1"/>
</dbReference>
<dbReference type="PROSITE" id="PS50404">
    <property type="entry name" value="GST_NTER"/>
    <property type="match status" value="1"/>
</dbReference>
<evidence type="ECO:0000250" key="1"/>
<evidence type="ECO:0000305" key="2"/>
<gene>
    <name type="primary">URE2</name>
    <name type="ordered locus">DEHA2F07744g</name>
</gene>
<name>URE2_DEBHA</name>
<proteinExistence type="inferred from homology"/>